<sequence length="192" mass="20699">MMPRLILASTSAYRRELLGRLHLDFDTARPEVDEHALPGETPQALATRLAGEKARAVAVRFPEAWVIGSDQVADLDGQALGKPGTLEQARAQLTRMSGRMVRFQTAVSLIGPDGFAAQALDLTDVQVRPLQPQEIERYLAAEPALECAGSFKCEGLGITLFDAIRSNDPTALVGLPLIAVARLLRQAGFSLP</sequence>
<dbReference type="EC" id="3.6.1.-" evidence="1"/>
<dbReference type="EMBL" id="CP000050">
    <property type="protein sequence ID" value="AAY50276.1"/>
    <property type="molecule type" value="Genomic_DNA"/>
</dbReference>
<dbReference type="RefSeq" id="WP_011036216.1">
    <property type="nucleotide sequence ID" value="NZ_CP155948.1"/>
</dbReference>
<dbReference type="SMR" id="Q4URP7"/>
<dbReference type="KEGG" id="xcb:XC_3232"/>
<dbReference type="HOGENOM" id="CLU_040416_1_0_6"/>
<dbReference type="Proteomes" id="UP000000420">
    <property type="component" value="Chromosome"/>
</dbReference>
<dbReference type="GO" id="GO:0005737">
    <property type="term" value="C:cytoplasm"/>
    <property type="evidence" value="ECO:0007669"/>
    <property type="project" value="UniProtKB-SubCell"/>
</dbReference>
<dbReference type="GO" id="GO:0047429">
    <property type="term" value="F:nucleoside triphosphate diphosphatase activity"/>
    <property type="evidence" value="ECO:0007669"/>
    <property type="project" value="InterPro"/>
</dbReference>
<dbReference type="GO" id="GO:0009117">
    <property type="term" value="P:nucleotide metabolic process"/>
    <property type="evidence" value="ECO:0007669"/>
    <property type="project" value="UniProtKB-KW"/>
</dbReference>
<dbReference type="CDD" id="cd00555">
    <property type="entry name" value="Maf"/>
    <property type="match status" value="1"/>
</dbReference>
<dbReference type="FunFam" id="3.90.950.10:FF:000005">
    <property type="entry name" value="7-methyl-GTP pyrophosphatase"/>
    <property type="match status" value="1"/>
</dbReference>
<dbReference type="Gene3D" id="3.90.950.10">
    <property type="match status" value="1"/>
</dbReference>
<dbReference type="HAMAP" id="MF_00528">
    <property type="entry name" value="Maf"/>
    <property type="match status" value="1"/>
</dbReference>
<dbReference type="InterPro" id="IPR029001">
    <property type="entry name" value="ITPase-like_fam"/>
</dbReference>
<dbReference type="InterPro" id="IPR003697">
    <property type="entry name" value="Maf-like"/>
</dbReference>
<dbReference type="NCBIfam" id="TIGR00172">
    <property type="entry name" value="maf"/>
    <property type="match status" value="1"/>
</dbReference>
<dbReference type="PANTHER" id="PTHR43213:SF10">
    <property type="entry name" value="7-METHYL-GTP PYROPHOSPHATASE"/>
    <property type="match status" value="1"/>
</dbReference>
<dbReference type="PANTHER" id="PTHR43213">
    <property type="entry name" value="BIFUNCTIONAL DTTP/UTP PYROPHOSPHATASE/METHYLTRANSFERASE PROTEIN-RELATED"/>
    <property type="match status" value="1"/>
</dbReference>
<dbReference type="Pfam" id="PF02545">
    <property type="entry name" value="Maf"/>
    <property type="match status" value="1"/>
</dbReference>
<dbReference type="PIRSF" id="PIRSF006305">
    <property type="entry name" value="Maf"/>
    <property type="match status" value="1"/>
</dbReference>
<dbReference type="SUPFAM" id="SSF52972">
    <property type="entry name" value="ITPase-like"/>
    <property type="match status" value="1"/>
</dbReference>
<evidence type="ECO:0000255" key="1">
    <source>
        <dbReference type="HAMAP-Rule" id="MF_00528"/>
    </source>
</evidence>
<accession>Q4URP7</accession>
<proteinExistence type="inferred from homology"/>
<reference key="1">
    <citation type="journal article" date="2005" name="Genome Res.">
        <title>Comparative and functional genomic analyses of the pathogenicity of phytopathogen Xanthomonas campestris pv. campestris.</title>
        <authorList>
            <person name="Qian W."/>
            <person name="Jia Y."/>
            <person name="Ren S.-X."/>
            <person name="He Y.-Q."/>
            <person name="Feng J.-X."/>
            <person name="Lu L.-F."/>
            <person name="Sun Q."/>
            <person name="Ying G."/>
            <person name="Tang D.-J."/>
            <person name="Tang H."/>
            <person name="Wu W."/>
            <person name="Hao P."/>
            <person name="Wang L."/>
            <person name="Jiang B.-L."/>
            <person name="Zeng S."/>
            <person name="Gu W.-Y."/>
            <person name="Lu G."/>
            <person name="Rong L."/>
            <person name="Tian Y."/>
            <person name="Yao Z."/>
            <person name="Fu G."/>
            <person name="Chen B."/>
            <person name="Fang R."/>
            <person name="Qiang B."/>
            <person name="Chen Z."/>
            <person name="Zhao G.-P."/>
            <person name="Tang J.-L."/>
            <person name="He C."/>
        </authorList>
    </citation>
    <scope>NUCLEOTIDE SEQUENCE [LARGE SCALE GENOMIC DNA]</scope>
    <source>
        <strain>8004</strain>
    </source>
</reference>
<gene>
    <name type="ordered locus">XC_3232</name>
</gene>
<feature type="chain" id="PRO_0000267466" description="7-methyl-GTP pyrophosphatase">
    <location>
        <begin position="1"/>
        <end position="192"/>
    </location>
</feature>
<feature type="active site" description="Proton acceptor" evidence="1">
    <location>
        <position position="70"/>
    </location>
</feature>
<feature type="site" description="Important for substrate specificity" evidence="1">
    <location>
        <position position="13"/>
    </location>
</feature>
<feature type="site" description="Important for substrate specificity" evidence="1">
    <location>
        <position position="71"/>
    </location>
</feature>
<feature type="site" description="Important for substrate specificity" evidence="1">
    <location>
        <position position="154"/>
    </location>
</feature>
<protein>
    <recommendedName>
        <fullName evidence="1">7-methyl-GTP pyrophosphatase</fullName>
        <shortName evidence="1">m(7)GTP pyrophosphatase</shortName>
        <ecNumber evidence="1">3.6.1.-</ecNumber>
    </recommendedName>
</protein>
<comment type="function">
    <text evidence="1">Nucleoside triphosphate pyrophosphatase that hydrolyzes 7-methyl-GTP (m(7)GTP). May have a dual role in cell division arrest and in preventing the incorporation of modified nucleotides into cellular nucleic acids.</text>
</comment>
<comment type="catalytic activity">
    <reaction evidence="1">
        <text>N(7)-methyl-GTP + H2O = N(7)-methyl-GMP + diphosphate + H(+)</text>
        <dbReference type="Rhea" id="RHEA:58744"/>
        <dbReference type="ChEBI" id="CHEBI:15377"/>
        <dbReference type="ChEBI" id="CHEBI:15378"/>
        <dbReference type="ChEBI" id="CHEBI:33019"/>
        <dbReference type="ChEBI" id="CHEBI:58285"/>
        <dbReference type="ChEBI" id="CHEBI:87133"/>
    </reaction>
</comment>
<comment type="cofactor">
    <cofactor evidence="1">
        <name>a divalent metal cation</name>
        <dbReference type="ChEBI" id="CHEBI:60240"/>
    </cofactor>
</comment>
<comment type="subcellular location">
    <subcellularLocation>
        <location evidence="1">Cytoplasm</location>
    </subcellularLocation>
</comment>
<comment type="similarity">
    <text evidence="1">Belongs to the Maf family. YceF subfamily.</text>
</comment>
<keyword id="KW-0963">Cytoplasm</keyword>
<keyword id="KW-0378">Hydrolase</keyword>
<keyword id="KW-0546">Nucleotide metabolism</keyword>
<name>NTPPB_XANC8</name>
<organism>
    <name type="scientific">Xanthomonas campestris pv. campestris (strain 8004)</name>
    <dbReference type="NCBI Taxonomy" id="314565"/>
    <lineage>
        <taxon>Bacteria</taxon>
        <taxon>Pseudomonadati</taxon>
        <taxon>Pseudomonadota</taxon>
        <taxon>Gammaproteobacteria</taxon>
        <taxon>Lysobacterales</taxon>
        <taxon>Lysobacteraceae</taxon>
        <taxon>Xanthomonas</taxon>
    </lineage>
</organism>